<sequence>MAVPARRTSKTKKRMRRGHIKLNVPNLQFDAATGEYRISHHVSPKGYYKGAQVVKKSDDNANA</sequence>
<proteinExistence type="inferred from homology"/>
<name>RL32_LACP3</name>
<organism>
    <name type="scientific">Lacticaseibacillus paracasei (strain ATCC 334 / BCRC 17002 / CCUG 31169 / CIP 107868 / KCTC 3260 / NRRL B-441)</name>
    <name type="common">Lactobacillus paracasei</name>
    <dbReference type="NCBI Taxonomy" id="321967"/>
    <lineage>
        <taxon>Bacteria</taxon>
        <taxon>Bacillati</taxon>
        <taxon>Bacillota</taxon>
        <taxon>Bacilli</taxon>
        <taxon>Lactobacillales</taxon>
        <taxon>Lactobacillaceae</taxon>
        <taxon>Lacticaseibacillus</taxon>
    </lineage>
</organism>
<comment type="similarity">
    <text evidence="1">Belongs to the bacterial ribosomal protein bL32 family.</text>
</comment>
<accession>Q039I6</accession>
<reference key="1">
    <citation type="journal article" date="2006" name="Proc. Natl. Acad. Sci. U.S.A.">
        <title>Comparative genomics of the lactic acid bacteria.</title>
        <authorList>
            <person name="Makarova K.S."/>
            <person name="Slesarev A."/>
            <person name="Wolf Y.I."/>
            <person name="Sorokin A."/>
            <person name="Mirkin B."/>
            <person name="Koonin E.V."/>
            <person name="Pavlov A."/>
            <person name="Pavlova N."/>
            <person name="Karamychev V."/>
            <person name="Polouchine N."/>
            <person name="Shakhova V."/>
            <person name="Grigoriev I."/>
            <person name="Lou Y."/>
            <person name="Rohksar D."/>
            <person name="Lucas S."/>
            <person name="Huang K."/>
            <person name="Goodstein D.M."/>
            <person name="Hawkins T."/>
            <person name="Plengvidhya V."/>
            <person name="Welker D."/>
            <person name="Hughes J."/>
            <person name="Goh Y."/>
            <person name="Benson A."/>
            <person name="Baldwin K."/>
            <person name="Lee J.-H."/>
            <person name="Diaz-Muniz I."/>
            <person name="Dosti B."/>
            <person name="Smeianov V."/>
            <person name="Wechter W."/>
            <person name="Barabote R."/>
            <person name="Lorca G."/>
            <person name="Altermann E."/>
            <person name="Barrangou R."/>
            <person name="Ganesan B."/>
            <person name="Xie Y."/>
            <person name="Rawsthorne H."/>
            <person name="Tamir D."/>
            <person name="Parker C."/>
            <person name="Breidt F."/>
            <person name="Broadbent J.R."/>
            <person name="Hutkins R."/>
            <person name="O'Sullivan D."/>
            <person name="Steele J."/>
            <person name="Unlu G."/>
            <person name="Saier M.H. Jr."/>
            <person name="Klaenhammer T."/>
            <person name="Richardson P."/>
            <person name="Kozyavkin S."/>
            <person name="Weimer B.C."/>
            <person name="Mills D.A."/>
        </authorList>
    </citation>
    <scope>NUCLEOTIDE SEQUENCE [LARGE SCALE GENOMIC DNA]</scope>
    <source>
        <strain>ATCC 334 / BCRC 17002 / CCUG 31169 / CIP 107868 / KCTC 3260 / NRRL B-441</strain>
    </source>
</reference>
<feature type="chain" id="PRO_0000296483" description="Large ribosomal subunit protein bL32">
    <location>
        <begin position="1"/>
        <end position="63"/>
    </location>
</feature>
<dbReference type="EMBL" id="CP000423">
    <property type="protein sequence ID" value="ABJ70136.1"/>
    <property type="molecule type" value="Genomic_DNA"/>
</dbReference>
<dbReference type="RefSeq" id="WP_003565316.1">
    <property type="nucleotide sequence ID" value="NC_008526.1"/>
</dbReference>
<dbReference type="RefSeq" id="YP_806578.1">
    <property type="nucleotide sequence ID" value="NC_008526.1"/>
</dbReference>
<dbReference type="SMR" id="Q039I6"/>
<dbReference type="STRING" id="321967.LSEI_1358"/>
<dbReference type="PaxDb" id="321967-LSEI_1358"/>
<dbReference type="GeneID" id="57090022"/>
<dbReference type="KEGG" id="lca:LSEI_1358"/>
<dbReference type="PATRIC" id="fig|321967.11.peg.1337"/>
<dbReference type="HOGENOM" id="CLU_129084_2_0_9"/>
<dbReference type="Proteomes" id="UP000001651">
    <property type="component" value="Chromosome"/>
</dbReference>
<dbReference type="GO" id="GO:0015934">
    <property type="term" value="C:large ribosomal subunit"/>
    <property type="evidence" value="ECO:0007669"/>
    <property type="project" value="InterPro"/>
</dbReference>
<dbReference type="GO" id="GO:0003735">
    <property type="term" value="F:structural constituent of ribosome"/>
    <property type="evidence" value="ECO:0007669"/>
    <property type="project" value="InterPro"/>
</dbReference>
<dbReference type="GO" id="GO:0006412">
    <property type="term" value="P:translation"/>
    <property type="evidence" value="ECO:0007669"/>
    <property type="project" value="UniProtKB-UniRule"/>
</dbReference>
<dbReference type="HAMAP" id="MF_00340">
    <property type="entry name" value="Ribosomal_bL32"/>
    <property type="match status" value="1"/>
</dbReference>
<dbReference type="InterPro" id="IPR002677">
    <property type="entry name" value="Ribosomal_bL32"/>
</dbReference>
<dbReference type="InterPro" id="IPR044957">
    <property type="entry name" value="Ribosomal_bL32_bact"/>
</dbReference>
<dbReference type="InterPro" id="IPR011332">
    <property type="entry name" value="Ribosomal_zn-bd"/>
</dbReference>
<dbReference type="NCBIfam" id="TIGR01031">
    <property type="entry name" value="rpmF_bact"/>
    <property type="match status" value="1"/>
</dbReference>
<dbReference type="PANTHER" id="PTHR35534">
    <property type="entry name" value="50S RIBOSOMAL PROTEIN L32"/>
    <property type="match status" value="1"/>
</dbReference>
<dbReference type="PANTHER" id="PTHR35534:SF1">
    <property type="entry name" value="LARGE RIBOSOMAL SUBUNIT PROTEIN BL32"/>
    <property type="match status" value="1"/>
</dbReference>
<dbReference type="Pfam" id="PF01783">
    <property type="entry name" value="Ribosomal_L32p"/>
    <property type="match status" value="1"/>
</dbReference>
<dbReference type="SUPFAM" id="SSF57829">
    <property type="entry name" value="Zn-binding ribosomal proteins"/>
    <property type="match status" value="1"/>
</dbReference>
<protein>
    <recommendedName>
        <fullName evidence="1">Large ribosomal subunit protein bL32</fullName>
    </recommendedName>
    <alternativeName>
        <fullName evidence="2">50S ribosomal protein L32</fullName>
    </alternativeName>
</protein>
<keyword id="KW-1185">Reference proteome</keyword>
<keyword id="KW-0687">Ribonucleoprotein</keyword>
<keyword id="KW-0689">Ribosomal protein</keyword>
<gene>
    <name evidence="1" type="primary">rpmF</name>
    <name type="ordered locus">LSEI_1358</name>
</gene>
<evidence type="ECO:0000255" key="1">
    <source>
        <dbReference type="HAMAP-Rule" id="MF_00340"/>
    </source>
</evidence>
<evidence type="ECO:0000305" key="2"/>